<sequence>MSELTALTIAEARDKLKAKAITATELTDAYLSAIDAANDAINAYVAVTHDQARSMAKASDERIAKGEAGALEGIPLGVKDLFATKGVHTQACSHILDGFKPEYESTVTANLWADGAVMLGKLNMDEVAMGSSNETSYYGPVKNPWRAKGSNADLVPGGSSGGSAAAVAAHLCAGATATDTGGSIRQPAAFTGTVGIKPTYGRVSRWGTVAFASSLDQAGPIARDVRDAAILMKSMASLDLKDTTSVDLPVPDYEAALGRSVKGMKIGIPREYRVDGMPGEIEELWQKGIQYLKDAGAEIVDISLPHTKYALPAYYIVAPAEASSNLARYDGVRYGLRVPGKDIADMYEQTRAAGFGKEVKRRIMIGTYVLSAGYYDAYYLRAQKVRTLIKKDFEDVFAKGVDAILTPATPSAAFGLADEVLANDPVKMYLNDIFTVTVNMAGLPGIAVPAGLNGQGLPLGLQLIGRPFEEETLFQAAHVIEQAAGRFTPAKWW</sequence>
<reference key="1">
    <citation type="journal article" date="2005" name="Infect. Immun.">
        <title>Whole-genome analyses of speciation events in pathogenic Brucellae.</title>
        <authorList>
            <person name="Chain P.S."/>
            <person name="Comerci D.J."/>
            <person name="Tolmasky M.E."/>
            <person name="Larimer F.W."/>
            <person name="Malfatti S.A."/>
            <person name="Vergez L.M."/>
            <person name="Aguero F."/>
            <person name="Land M.L."/>
            <person name="Ugalde R.A."/>
            <person name="Garcia E."/>
        </authorList>
    </citation>
    <scope>NUCLEOTIDE SEQUENCE [LARGE SCALE GENOMIC DNA]</scope>
    <source>
        <strain>2308</strain>
    </source>
</reference>
<accession>Q2YKL3</accession>
<evidence type="ECO:0000255" key="1">
    <source>
        <dbReference type="HAMAP-Rule" id="MF_00120"/>
    </source>
</evidence>
<name>GATA_BRUA2</name>
<organism>
    <name type="scientific">Brucella abortus (strain 2308)</name>
    <dbReference type="NCBI Taxonomy" id="359391"/>
    <lineage>
        <taxon>Bacteria</taxon>
        <taxon>Pseudomonadati</taxon>
        <taxon>Pseudomonadota</taxon>
        <taxon>Alphaproteobacteria</taxon>
        <taxon>Hyphomicrobiales</taxon>
        <taxon>Brucellaceae</taxon>
        <taxon>Brucella/Ochrobactrum group</taxon>
        <taxon>Brucella</taxon>
    </lineage>
</organism>
<gene>
    <name evidence="1" type="primary">gatA</name>
    <name type="ordered locus">BAB2_0646</name>
</gene>
<comment type="function">
    <text evidence="1">Allows the formation of correctly charged Gln-tRNA(Gln) through the transamidation of misacylated Glu-tRNA(Gln) in organisms which lack glutaminyl-tRNA synthetase. The reaction takes place in the presence of glutamine and ATP through an activated gamma-phospho-Glu-tRNA(Gln).</text>
</comment>
<comment type="catalytic activity">
    <reaction evidence="1">
        <text>L-glutamyl-tRNA(Gln) + L-glutamine + ATP + H2O = L-glutaminyl-tRNA(Gln) + L-glutamate + ADP + phosphate + H(+)</text>
        <dbReference type="Rhea" id="RHEA:17521"/>
        <dbReference type="Rhea" id="RHEA-COMP:9681"/>
        <dbReference type="Rhea" id="RHEA-COMP:9684"/>
        <dbReference type="ChEBI" id="CHEBI:15377"/>
        <dbReference type="ChEBI" id="CHEBI:15378"/>
        <dbReference type="ChEBI" id="CHEBI:29985"/>
        <dbReference type="ChEBI" id="CHEBI:30616"/>
        <dbReference type="ChEBI" id="CHEBI:43474"/>
        <dbReference type="ChEBI" id="CHEBI:58359"/>
        <dbReference type="ChEBI" id="CHEBI:78520"/>
        <dbReference type="ChEBI" id="CHEBI:78521"/>
        <dbReference type="ChEBI" id="CHEBI:456216"/>
        <dbReference type="EC" id="6.3.5.7"/>
    </reaction>
</comment>
<comment type="subunit">
    <text evidence="1">Heterotrimer of A, B and C subunits.</text>
</comment>
<comment type="similarity">
    <text evidence="1">Belongs to the amidase family. GatA subfamily.</text>
</comment>
<feature type="chain" id="PRO_0000241078" description="Glutamyl-tRNA(Gln) amidotransferase subunit A">
    <location>
        <begin position="1"/>
        <end position="493"/>
    </location>
</feature>
<feature type="active site" description="Charge relay system" evidence="1">
    <location>
        <position position="79"/>
    </location>
</feature>
<feature type="active site" description="Charge relay system" evidence="1">
    <location>
        <position position="159"/>
    </location>
</feature>
<feature type="active site" description="Acyl-ester intermediate" evidence="1">
    <location>
        <position position="183"/>
    </location>
</feature>
<dbReference type="EC" id="6.3.5.7" evidence="1"/>
<dbReference type="EMBL" id="AM040265">
    <property type="protein sequence ID" value="CAJ12812.1"/>
    <property type="molecule type" value="Genomic_DNA"/>
</dbReference>
<dbReference type="RefSeq" id="WP_002966039.1">
    <property type="nucleotide sequence ID" value="NZ_KN046823.1"/>
</dbReference>
<dbReference type="SMR" id="Q2YKL3"/>
<dbReference type="STRING" id="359391.BAB2_0646"/>
<dbReference type="GeneID" id="93015467"/>
<dbReference type="KEGG" id="bmf:BAB2_0646"/>
<dbReference type="PATRIC" id="fig|359391.11.peg.2828"/>
<dbReference type="HOGENOM" id="CLU_009600_0_3_5"/>
<dbReference type="PhylomeDB" id="Q2YKL3"/>
<dbReference type="Proteomes" id="UP000002719">
    <property type="component" value="Chromosome II"/>
</dbReference>
<dbReference type="GO" id="GO:0030956">
    <property type="term" value="C:glutamyl-tRNA(Gln) amidotransferase complex"/>
    <property type="evidence" value="ECO:0007669"/>
    <property type="project" value="InterPro"/>
</dbReference>
<dbReference type="GO" id="GO:0005524">
    <property type="term" value="F:ATP binding"/>
    <property type="evidence" value="ECO:0007669"/>
    <property type="project" value="UniProtKB-KW"/>
</dbReference>
<dbReference type="GO" id="GO:0050567">
    <property type="term" value="F:glutaminyl-tRNA synthase (glutamine-hydrolyzing) activity"/>
    <property type="evidence" value="ECO:0007669"/>
    <property type="project" value="UniProtKB-UniRule"/>
</dbReference>
<dbReference type="GO" id="GO:0006412">
    <property type="term" value="P:translation"/>
    <property type="evidence" value="ECO:0007669"/>
    <property type="project" value="UniProtKB-UniRule"/>
</dbReference>
<dbReference type="Gene3D" id="3.90.1300.10">
    <property type="entry name" value="Amidase signature (AS) domain"/>
    <property type="match status" value="1"/>
</dbReference>
<dbReference type="HAMAP" id="MF_00120">
    <property type="entry name" value="GatA"/>
    <property type="match status" value="1"/>
</dbReference>
<dbReference type="InterPro" id="IPR000120">
    <property type="entry name" value="Amidase"/>
</dbReference>
<dbReference type="InterPro" id="IPR020556">
    <property type="entry name" value="Amidase_CS"/>
</dbReference>
<dbReference type="InterPro" id="IPR023631">
    <property type="entry name" value="Amidase_dom"/>
</dbReference>
<dbReference type="InterPro" id="IPR036928">
    <property type="entry name" value="AS_sf"/>
</dbReference>
<dbReference type="InterPro" id="IPR004412">
    <property type="entry name" value="GatA"/>
</dbReference>
<dbReference type="NCBIfam" id="TIGR00132">
    <property type="entry name" value="gatA"/>
    <property type="match status" value="1"/>
</dbReference>
<dbReference type="PANTHER" id="PTHR11895:SF151">
    <property type="entry name" value="GLUTAMYL-TRNA(GLN) AMIDOTRANSFERASE SUBUNIT A"/>
    <property type="match status" value="1"/>
</dbReference>
<dbReference type="PANTHER" id="PTHR11895">
    <property type="entry name" value="TRANSAMIDASE"/>
    <property type="match status" value="1"/>
</dbReference>
<dbReference type="Pfam" id="PF01425">
    <property type="entry name" value="Amidase"/>
    <property type="match status" value="1"/>
</dbReference>
<dbReference type="SUPFAM" id="SSF75304">
    <property type="entry name" value="Amidase signature (AS) enzymes"/>
    <property type="match status" value="1"/>
</dbReference>
<dbReference type="PROSITE" id="PS00571">
    <property type="entry name" value="AMIDASES"/>
    <property type="match status" value="1"/>
</dbReference>
<keyword id="KW-0067">ATP-binding</keyword>
<keyword id="KW-0436">Ligase</keyword>
<keyword id="KW-0547">Nucleotide-binding</keyword>
<keyword id="KW-0648">Protein biosynthesis</keyword>
<keyword id="KW-1185">Reference proteome</keyword>
<proteinExistence type="inferred from homology"/>
<protein>
    <recommendedName>
        <fullName evidence="1">Glutamyl-tRNA(Gln) amidotransferase subunit A</fullName>
        <shortName evidence="1">Glu-ADT subunit A</shortName>
        <ecNumber evidence="1">6.3.5.7</ecNumber>
    </recommendedName>
</protein>